<proteinExistence type="inferred from homology"/>
<dbReference type="EMBL" id="CP001063">
    <property type="protein sequence ID" value="ACD08355.1"/>
    <property type="molecule type" value="Genomic_DNA"/>
</dbReference>
<dbReference type="RefSeq" id="WP_001276008.1">
    <property type="nucleotide sequence ID" value="NC_010658.1"/>
</dbReference>
<dbReference type="SMR" id="B2U0S7"/>
<dbReference type="STRING" id="344609.SbBS512_E3331"/>
<dbReference type="GeneID" id="93779091"/>
<dbReference type="KEGG" id="sbc:SbBS512_E3331"/>
<dbReference type="HOGENOM" id="CLU_116623_3_0_6"/>
<dbReference type="Proteomes" id="UP000001030">
    <property type="component" value="Chromosome"/>
</dbReference>
<dbReference type="GO" id="GO:0032153">
    <property type="term" value="C:cell division site"/>
    <property type="evidence" value="ECO:0007669"/>
    <property type="project" value="TreeGrafter"/>
</dbReference>
<dbReference type="GO" id="GO:0030428">
    <property type="term" value="C:cell septum"/>
    <property type="evidence" value="ECO:0007669"/>
    <property type="project" value="TreeGrafter"/>
</dbReference>
<dbReference type="GO" id="GO:0005829">
    <property type="term" value="C:cytosol"/>
    <property type="evidence" value="ECO:0007669"/>
    <property type="project" value="TreeGrafter"/>
</dbReference>
<dbReference type="GO" id="GO:0005886">
    <property type="term" value="C:plasma membrane"/>
    <property type="evidence" value="ECO:0007669"/>
    <property type="project" value="UniProtKB-UniRule"/>
</dbReference>
<dbReference type="GO" id="GO:0000917">
    <property type="term" value="P:division septum assembly"/>
    <property type="evidence" value="ECO:0007669"/>
    <property type="project" value="UniProtKB-KW"/>
</dbReference>
<dbReference type="GO" id="GO:0043093">
    <property type="term" value="P:FtsZ-dependent cytokinesis"/>
    <property type="evidence" value="ECO:0007669"/>
    <property type="project" value="TreeGrafter"/>
</dbReference>
<dbReference type="GO" id="GO:0000921">
    <property type="term" value="P:septin ring assembly"/>
    <property type="evidence" value="ECO:0007669"/>
    <property type="project" value="TreeGrafter"/>
</dbReference>
<dbReference type="FunFam" id="1.20.5.50:FF:000001">
    <property type="entry name" value="Cell division protein ZapA"/>
    <property type="match status" value="1"/>
</dbReference>
<dbReference type="FunFam" id="3.30.160.880:FF:000001">
    <property type="entry name" value="Cell division protein ZapA"/>
    <property type="match status" value="1"/>
</dbReference>
<dbReference type="Gene3D" id="1.20.5.50">
    <property type="match status" value="1"/>
</dbReference>
<dbReference type="Gene3D" id="3.30.160.880">
    <property type="entry name" value="Cell division protein ZapA protomer, N-terminal domain"/>
    <property type="match status" value="1"/>
</dbReference>
<dbReference type="HAMAP" id="MF_02012">
    <property type="entry name" value="ZapA_type1"/>
    <property type="match status" value="1"/>
</dbReference>
<dbReference type="InterPro" id="IPR007838">
    <property type="entry name" value="Cell_div_ZapA-like"/>
</dbReference>
<dbReference type="InterPro" id="IPR036192">
    <property type="entry name" value="Cell_div_ZapA-like_sf"/>
</dbReference>
<dbReference type="InterPro" id="IPR023771">
    <property type="entry name" value="Cell_div_ZapA_eubact"/>
</dbReference>
<dbReference type="InterPro" id="IPR042233">
    <property type="entry name" value="Cell_div_ZapA_N"/>
</dbReference>
<dbReference type="NCBIfam" id="NF008209">
    <property type="entry name" value="PRK10972.1"/>
    <property type="match status" value="1"/>
</dbReference>
<dbReference type="PANTHER" id="PTHR34981">
    <property type="entry name" value="CELL DIVISION PROTEIN ZAPA"/>
    <property type="match status" value="1"/>
</dbReference>
<dbReference type="PANTHER" id="PTHR34981:SF1">
    <property type="entry name" value="CELL DIVISION PROTEIN ZAPA"/>
    <property type="match status" value="1"/>
</dbReference>
<dbReference type="Pfam" id="PF05164">
    <property type="entry name" value="ZapA"/>
    <property type="match status" value="1"/>
</dbReference>
<dbReference type="SUPFAM" id="SSF102829">
    <property type="entry name" value="Cell division protein ZapA-like"/>
    <property type="match status" value="1"/>
</dbReference>
<protein>
    <recommendedName>
        <fullName evidence="1">Cell division protein ZapA</fullName>
    </recommendedName>
    <alternativeName>
        <fullName evidence="1">Z ring-associated protein ZapA</fullName>
    </alternativeName>
</protein>
<evidence type="ECO:0000255" key="1">
    <source>
        <dbReference type="HAMAP-Rule" id="MF_02012"/>
    </source>
</evidence>
<sequence length="109" mass="12594">MSAQPVDIQIFGRSLRVNCPPDQRDALNQAADDLNQRLQDLKERTRVTNTEQLVFIAALNISYELAQEKAKTRDYAASMEQRIRMLQQTIEQALLEQGRITEKTNQNFE</sequence>
<keyword id="KW-0131">Cell cycle</keyword>
<keyword id="KW-0132">Cell division</keyword>
<keyword id="KW-0175">Coiled coil</keyword>
<keyword id="KW-0963">Cytoplasm</keyword>
<keyword id="KW-1185">Reference proteome</keyword>
<keyword id="KW-0717">Septation</keyword>
<reference key="1">
    <citation type="submission" date="2008-05" db="EMBL/GenBank/DDBJ databases">
        <title>Complete sequence of Shigella boydii serotype 18 strain BS512.</title>
        <authorList>
            <person name="Rasko D.A."/>
            <person name="Rosovitz M."/>
            <person name="Maurelli A.T."/>
            <person name="Myers G."/>
            <person name="Seshadri R."/>
            <person name="Cer R."/>
            <person name="Jiang L."/>
            <person name="Ravel J."/>
            <person name="Sebastian Y."/>
        </authorList>
    </citation>
    <scope>NUCLEOTIDE SEQUENCE [LARGE SCALE GENOMIC DNA]</scope>
    <source>
        <strain>CDC 3083-94 / BS512</strain>
    </source>
</reference>
<accession>B2U0S7</accession>
<gene>
    <name evidence="1" type="primary">zapA</name>
    <name type="ordered locus">SbBS512_E3331</name>
</gene>
<feature type="chain" id="PRO_1000189525" description="Cell division protein ZapA">
    <location>
        <begin position="1"/>
        <end position="109"/>
    </location>
</feature>
<feature type="coiled-coil region" evidence="1">
    <location>
        <begin position="21"/>
        <end position="99"/>
    </location>
</feature>
<organism>
    <name type="scientific">Shigella boydii serotype 18 (strain CDC 3083-94 / BS512)</name>
    <dbReference type="NCBI Taxonomy" id="344609"/>
    <lineage>
        <taxon>Bacteria</taxon>
        <taxon>Pseudomonadati</taxon>
        <taxon>Pseudomonadota</taxon>
        <taxon>Gammaproteobacteria</taxon>
        <taxon>Enterobacterales</taxon>
        <taxon>Enterobacteriaceae</taxon>
        <taxon>Shigella</taxon>
    </lineage>
</organism>
<comment type="function">
    <text evidence="1">Activator of cell division through the inhibition of FtsZ GTPase activity, therefore promoting FtsZ assembly into bundles of protofilaments necessary for the formation of the division Z ring. It is recruited early at mid-cell but it is not essential for cell division.</text>
</comment>
<comment type="subunit">
    <text evidence="1">Homodimer. Interacts with FtsZ.</text>
</comment>
<comment type="subcellular location">
    <subcellularLocation>
        <location evidence="1">Cytoplasm</location>
    </subcellularLocation>
    <text evidence="1">Localizes at mid-cell.</text>
</comment>
<comment type="similarity">
    <text evidence="1">Belongs to the ZapA family. Type 1 subfamily.</text>
</comment>
<name>ZAPA_SHIB3</name>